<proteinExistence type="evidence at transcript level"/>
<accession>Q2T9I9</accession>
<accession>Q4V7I6</accession>
<comment type="function">
    <text evidence="1">Component of the HUSH complex, a multiprotein complex that mediates epigenetic repression. The HUSH complex is recruited to genomic loci rich in H3K9me3 and is probably required to maintain transcriptional silencing by promoting further deposition of H3K9me3.</text>
</comment>
<comment type="subunit">
    <text evidence="1">Component of the HUSH complex.</text>
</comment>
<comment type="subcellular location">
    <subcellularLocation>
        <location evidence="1">Nucleus</location>
    </subcellularLocation>
    <subcellularLocation>
        <location evidence="1">Chromosome</location>
    </subcellularLocation>
    <text evidence="1">Localizes to chromatin.</text>
</comment>
<comment type="similarity">
    <text evidence="3">Belongs to the TASOR family.</text>
</comment>
<comment type="sequence caution" evidence="3">
    <conflict type="miscellaneous discrepancy">
        <sequence resource="EMBL-CDS" id="AAH97889"/>
    </conflict>
    <text>Contaminating sequence. Potential poly-A sequence.</text>
</comment>
<feature type="chain" id="PRO_0000295730" description="Protein TASOR">
    <location>
        <begin position="1"/>
        <end position="1555"/>
    </location>
</feature>
<feature type="region of interest" description="Disordered" evidence="2">
    <location>
        <begin position="1"/>
        <end position="74"/>
    </location>
</feature>
<feature type="region of interest" description="Disordered" evidence="2">
    <location>
        <begin position="645"/>
        <end position="711"/>
    </location>
</feature>
<feature type="region of interest" description="Disordered" evidence="2">
    <location>
        <begin position="744"/>
        <end position="773"/>
    </location>
</feature>
<feature type="region of interest" description="Disordered" evidence="2">
    <location>
        <begin position="870"/>
        <end position="911"/>
    </location>
</feature>
<feature type="region of interest" description="Disordered" evidence="2">
    <location>
        <begin position="1390"/>
        <end position="1462"/>
    </location>
</feature>
<feature type="compositionally biased region" description="Polar residues" evidence="2">
    <location>
        <begin position="35"/>
        <end position="47"/>
    </location>
</feature>
<feature type="compositionally biased region" description="Basic residues" evidence="2">
    <location>
        <begin position="61"/>
        <end position="71"/>
    </location>
</feature>
<feature type="compositionally biased region" description="Basic and acidic residues" evidence="2">
    <location>
        <begin position="667"/>
        <end position="688"/>
    </location>
</feature>
<feature type="compositionally biased region" description="Polar residues" evidence="2">
    <location>
        <begin position="692"/>
        <end position="702"/>
    </location>
</feature>
<feature type="compositionally biased region" description="Polar residues" evidence="2">
    <location>
        <begin position="744"/>
        <end position="761"/>
    </location>
</feature>
<feature type="compositionally biased region" description="Basic and acidic residues" evidence="2">
    <location>
        <begin position="888"/>
        <end position="904"/>
    </location>
</feature>
<feature type="compositionally biased region" description="Acidic residues" evidence="2">
    <location>
        <begin position="1402"/>
        <end position="1417"/>
    </location>
</feature>
<feature type="compositionally biased region" description="Polar residues" evidence="2">
    <location>
        <begin position="1448"/>
        <end position="1458"/>
    </location>
</feature>
<feature type="sequence conflict" description="In Ref. 1; AAH97889." evidence="3" ref="1">
    <original>P</original>
    <variation>L</variation>
    <location>
        <position position="54"/>
    </location>
</feature>
<gene>
    <name evidence="1" type="primary">tasor</name>
    <name type="synonym">fam208a</name>
</gene>
<keyword id="KW-0158">Chromosome</keyword>
<keyword id="KW-0539">Nucleus</keyword>
<keyword id="KW-1185">Reference proteome</keyword>
<keyword id="KW-0678">Repressor</keyword>
<keyword id="KW-0804">Transcription</keyword>
<keyword id="KW-0805">Transcription regulation</keyword>
<evidence type="ECO:0000250" key="1">
    <source>
        <dbReference type="UniProtKB" id="Q9UK61"/>
    </source>
</evidence>
<evidence type="ECO:0000256" key="2">
    <source>
        <dbReference type="SAM" id="MobiDB-lite"/>
    </source>
</evidence>
<evidence type="ECO:0000305" key="3"/>
<sequence length="1555" mass="176403">MEENKSVAEGKAATGSLKESEETSAQNGELGEPEVQQTLKRTNSTESGGTGQKPPEEAPRRRFQIPRKSRDKRALQVISSGSREFEEILKILHSSYLDANSKASFSYKCARLVHNEFLEKEFTEKRRQLKFDGRLDKELVESYVFLLVDQEQMHSITEKGLHVGHSRMTTLGKPSMGVYLSRYADLLQANPLETGTTGDIFIFKVIKGKMKFVFDHIRNNQMDSFSGNGGLDPVPKHECHVLKNMNAVTALLGYRAFERTQYYFYEYGFDEVLKRPRHVCPYAVMSFGYKDELATRQPPLPTSGPVSFPTERSFDRSSFTLWRGQLLNKGKLLCYASLKSTSGPFIPYRLPERLDLDIVIKIEVIKKSIPAVLFYKETHNKPNEAKHGGIYSRLYEVVEKTRTGSHLQGLLQKIERENLALVKPLDDRGFMFLYFPSPMTSAYASAKTRLLHALFIYHESRLTQPVANVPVPPSFVPESHEFMPEVLTFVPALHFALHKSQSDTSADFNDVVEKHSRIYLKRRAEKLNKFKEYVLKPYDSRLDYKKSLYVAPRIKGHIESALRSYLFGSEAYTIPVDKAKEMLKENQRFQQFSPVSDYEPVEDDHDSNKYNKKCPVSYVETNSEKSSESTDWDIDKINGLINLIQKKKQSKPETDEPSGVGLKRKLDRQSEKAWKHRKCEENVHHDNEPGESAQSLISSLGGQDTDLRQETESLSSECIKMLLEKLADSCIDPAMAESLKTLKQNSTEELPSQKLKNLSQAHDTEREGAGQDQHIVYNDQTTDNQENTTCLSEEAQQAEGSHSDHSVLMEEKILDPPLESASPCPSNTAGNNCPAQGPNSLDLEMHWKLIPIAEANLTEEQLVYVSTEDALPNDPRAGHKRRGSRYSPLHETERQRPRHDRDYCRSLTTPSRTERNMLQSKHCHNGLIENTVLEVYNTFSEQLHDVLKQRDVPYMVPAAPPLLSSDDRVLKLSDCLCEQVSDICVQQYVDDLHTTLDSVVAAHINSCAVSRTGSPVTEIMAATEVHTFHPKQTVTEYPHVHEHFHVNDLHSDVREANPFSADHVYKVGEENAANGHALSHNSRDLSQETPEISTSGVTDLSEPHLAISNLINQMNPEVFNNLVKIITHVNKNSVKFYVHTEEENAICQNIKEYLLKLGNTECRPEKFLESKTKADKLLIIIQNEDIPNCIHRVPALVLLKRLPSVSFAGVDSLDDLKNHTYNEIFVSGGFIVSDESVLNPETVTIDELKKFLMFLEEINSPDANWQWKIHYKFHKRLKELGRLNTNALNILTLLTTYQKKNLVEILSYHLSCDPQNQQAPQLECLIKLQVQYMKQRHVLFLTEKDAARFPDYCDNGIVVTRMVDFMDNFSNLIGHHSPNNEEQRLSQLTNQGDETAPGEADSKEEEDMSLDSEDDTPPIEVCTDSWKPESQKQNISSLLELVDKDQTESPSTLNQGKTPTLDELQPITPVSVAGSTTGENSVSTGDELGSNTKDYNREVNLSHQFSHFSLLTHQTFLGSMYPTLTNPSQAEICFMNSYSQLTEPETSKNSERKQK</sequence>
<dbReference type="EMBL" id="BC097889">
    <property type="protein sequence ID" value="AAH97889.1"/>
    <property type="status" value="ALT_SEQ"/>
    <property type="molecule type" value="mRNA"/>
</dbReference>
<dbReference type="EMBL" id="BC111503">
    <property type="protein sequence ID" value="AAI11504.1"/>
    <property type="molecule type" value="mRNA"/>
</dbReference>
<dbReference type="SMR" id="Q2T9I9"/>
<dbReference type="GeneID" id="735029"/>
<dbReference type="KEGG" id="xla:735029"/>
<dbReference type="AGR" id="Xenbase:XB-GENE-5961190"/>
<dbReference type="CTD" id="735029"/>
<dbReference type="Xenbase" id="XB-GENE-5961190">
    <property type="gene designation" value="tasor.S"/>
</dbReference>
<dbReference type="OrthoDB" id="5960959at2759"/>
<dbReference type="Proteomes" id="UP000186698">
    <property type="component" value="Chromosome 4S"/>
</dbReference>
<dbReference type="Bgee" id="735029">
    <property type="expression patterns" value="Expressed in blastula and 19 other cell types or tissues"/>
</dbReference>
<dbReference type="GO" id="GO:0000792">
    <property type="term" value="C:heterochromatin"/>
    <property type="evidence" value="ECO:0000318"/>
    <property type="project" value="GO_Central"/>
</dbReference>
<dbReference type="GO" id="GO:0005654">
    <property type="term" value="C:nucleoplasm"/>
    <property type="evidence" value="ECO:0000318"/>
    <property type="project" value="GO_Central"/>
</dbReference>
<dbReference type="GO" id="GO:0003682">
    <property type="term" value="F:chromatin binding"/>
    <property type="evidence" value="ECO:0000318"/>
    <property type="project" value="GO_Central"/>
</dbReference>
<dbReference type="GO" id="GO:0045814">
    <property type="term" value="P:negative regulation of gene expression, epigenetic"/>
    <property type="evidence" value="ECO:0000318"/>
    <property type="project" value="GO_Central"/>
</dbReference>
<dbReference type="GO" id="GO:0097355">
    <property type="term" value="P:protein localization to heterochromatin"/>
    <property type="evidence" value="ECO:0000318"/>
    <property type="project" value="GO_Central"/>
</dbReference>
<dbReference type="InterPro" id="IPR056242">
    <property type="entry name" value="PIN_TASOR"/>
</dbReference>
<dbReference type="InterPro" id="IPR046432">
    <property type="entry name" value="TASOR"/>
</dbReference>
<dbReference type="InterPro" id="IPR056243">
    <property type="entry name" value="TASOR_ab_dom"/>
</dbReference>
<dbReference type="InterPro" id="IPR022188">
    <property type="entry name" value="TASOR_DUF3715"/>
</dbReference>
<dbReference type="PANTHER" id="PTHR16207:SF1">
    <property type="entry name" value="PROTEIN TASOR"/>
    <property type="match status" value="1"/>
</dbReference>
<dbReference type="PANTHER" id="PTHR16207">
    <property type="entry name" value="SET DOMAIN-CONTAINING PROTEIN"/>
    <property type="match status" value="1"/>
</dbReference>
<dbReference type="Pfam" id="PF12509">
    <property type="entry name" value="DUF3715"/>
    <property type="match status" value="1"/>
</dbReference>
<dbReference type="Pfam" id="PF24630">
    <property type="entry name" value="PIN_TASOR"/>
    <property type="match status" value="1"/>
</dbReference>
<dbReference type="Pfam" id="PF23314">
    <property type="entry name" value="TASOR_alpha-beta"/>
    <property type="match status" value="1"/>
</dbReference>
<protein>
    <recommendedName>
        <fullName evidence="3">Protein TASOR</fullName>
    </recommendedName>
    <alternativeName>
        <fullName evidence="1">Transgene activation suppressor protein</fullName>
    </alternativeName>
</protein>
<reference key="1">
    <citation type="submission" date="2005-12" db="EMBL/GenBank/DDBJ databases">
        <authorList>
            <consortium name="NIH - Xenopus Gene Collection (XGC) project"/>
        </authorList>
    </citation>
    <scope>NUCLEOTIDE SEQUENCE [LARGE SCALE MRNA]</scope>
    <source>
        <tissue>Egg</tissue>
        <tissue>Oocyte</tissue>
    </source>
</reference>
<organism>
    <name type="scientific">Xenopus laevis</name>
    <name type="common">African clawed frog</name>
    <dbReference type="NCBI Taxonomy" id="8355"/>
    <lineage>
        <taxon>Eukaryota</taxon>
        <taxon>Metazoa</taxon>
        <taxon>Chordata</taxon>
        <taxon>Craniata</taxon>
        <taxon>Vertebrata</taxon>
        <taxon>Euteleostomi</taxon>
        <taxon>Amphibia</taxon>
        <taxon>Batrachia</taxon>
        <taxon>Anura</taxon>
        <taxon>Pipoidea</taxon>
        <taxon>Pipidae</taxon>
        <taxon>Xenopodinae</taxon>
        <taxon>Xenopus</taxon>
        <taxon>Xenopus</taxon>
    </lineage>
</organism>
<name>TASOR_XENLA</name>